<organism>
    <name type="scientific">Arabidopsis thaliana</name>
    <name type="common">Mouse-ear cress</name>
    <dbReference type="NCBI Taxonomy" id="3702"/>
    <lineage>
        <taxon>Eukaryota</taxon>
        <taxon>Viridiplantae</taxon>
        <taxon>Streptophyta</taxon>
        <taxon>Embryophyta</taxon>
        <taxon>Tracheophyta</taxon>
        <taxon>Spermatophyta</taxon>
        <taxon>Magnoliopsida</taxon>
        <taxon>eudicotyledons</taxon>
        <taxon>Gunneridae</taxon>
        <taxon>Pentapetalae</taxon>
        <taxon>rosids</taxon>
        <taxon>malvids</taxon>
        <taxon>Brassicales</taxon>
        <taxon>Brassicaceae</taxon>
        <taxon>Camelineae</taxon>
        <taxon>Arabidopsis</taxon>
    </lineage>
</organism>
<keyword id="KW-0067">ATP-binding</keyword>
<keyword id="KW-1003">Cell membrane</keyword>
<keyword id="KW-0325">Glycoprotein</keyword>
<keyword id="KW-0418">Kinase</keyword>
<keyword id="KW-0433">Leucine-rich repeat</keyword>
<keyword id="KW-0472">Membrane</keyword>
<keyword id="KW-0547">Nucleotide-binding</keyword>
<keyword id="KW-0597">Phosphoprotein</keyword>
<keyword id="KW-0675">Receptor</keyword>
<keyword id="KW-1185">Reference proteome</keyword>
<keyword id="KW-0677">Repeat</keyword>
<keyword id="KW-0723">Serine/threonine-protein kinase</keyword>
<keyword id="KW-0732">Signal</keyword>
<keyword id="KW-0808">Transferase</keyword>
<keyword id="KW-0812">Transmembrane</keyword>
<keyword id="KW-1133">Transmembrane helix</keyword>
<protein>
    <recommendedName>
        <fullName>Probable LRR receptor-like serine/threonine-protein kinase At3g47570</fullName>
        <ecNumber>2.7.11.1</ecNumber>
    </recommendedName>
</protein>
<name>Y3475_ARATH</name>
<comment type="catalytic activity">
    <reaction>
        <text>L-seryl-[protein] + ATP = O-phospho-L-seryl-[protein] + ADP + H(+)</text>
        <dbReference type="Rhea" id="RHEA:17989"/>
        <dbReference type="Rhea" id="RHEA-COMP:9863"/>
        <dbReference type="Rhea" id="RHEA-COMP:11604"/>
        <dbReference type="ChEBI" id="CHEBI:15378"/>
        <dbReference type="ChEBI" id="CHEBI:29999"/>
        <dbReference type="ChEBI" id="CHEBI:30616"/>
        <dbReference type="ChEBI" id="CHEBI:83421"/>
        <dbReference type="ChEBI" id="CHEBI:456216"/>
        <dbReference type="EC" id="2.7.11.1"/>
    </reaction>
</comment>
<comment type="catalytic activity">
    <reaction>
        <text>L-threonyl-[protein] + ATP = O-phospho-L-threonyl-[protein] + ADP + H(+)</text>
        <dbReference type="Rhea" id="RHEA:46608"/>
        <dbReference type="Rhea" id="RHEA-COMP:11060"/>
        <dbReference type="Rhea" id="RHEA-COMP:11605"/>
        <dbReference type="ChEBI" id="CHEBI:15378"/>
        <dbReference type="ChEBI" id="CHEBI:30013"/>
        <dbReference type="ChEBI" id="CHEBI:30616"/>
        <dbReference type="ChEBI" id="CHEBI:61977"/>
        <dbReference type="ChEBI" id="CHEBI:456216"/>
        <dbReference type="EC" id="2.7.11.1"/>
    </reaction>
</comment>
<comment type="subcellular location">
    <subcellularLocation>
        <location evidence="1">Cell membrane</location>
        <topology evidence="1">Single-pass type I membrane protein</topology>
    </subcellularLocation>
</comment>
<comment type="similarity">
    <text evidence="5">Belongs to the protein kinase superfamily. Ser/Thr protein kinase family.</text>
</comment>
<comment type="sequence caution" evidence="7">
    <conflict type="erroneous gene model prediction">
        <sequence resource="EMBL-CDS" id="CAB61983"/>
    </conflict>
</comment>
<feature type="signal peptide" evidence="4">
    <location>
        <begin position="1"/>
        <end position="19"/>
    </location>
</feature>
<feature type="chain" id="PRO_0000387551" description="Probable LRR receptor-like serine/threonine-protein kinase At3g47570">
    <location>
        <begin position="20"/>
        <end position="1010"/>
    </location>
</feature>
<feature type="topological domain" description="Extracellular" evidence="4">
    <location>
        <begin position="20"/>
        <end position="645"/>
    </location>
</feature>
<feature type="transmembrane region" description="Helical" evidence="4">
    <location>
        <begin position="646"/>
        <end position="666"/>
    </location>
</feature>
<feature type="topological domain" description="Cytoplasmic" evidence="4">
    <location>
        <begin position="667"/>
        <end position="1010"/>
    </location>
</feature>
<feature type="repeat" description="LRR 1">
    <location>
        <begin position="89"/>
        <end position="113"/>
    </location>
</feature>
<feature type="repeat" description="LRR 2">
    <location>
        <begin position="114"/>
        <end position="137"/>
    </location>
</feature>
<feature type="repeat" description="LRR 3">
    <location>
        <begin position="139"/>
        <end position="161"/>
    </location>
</feature>
<feature type="repeat" description="LRR 4">
    <location>
        <begin position="162"/>
        <end position="185"/>
    </location>
</feature>
<feature type="repeat" description="LRR 5">
    <location>
        <begin position="186"/>
        <end position="209"/>
    </location>
</feature>
<feature type="repeat" description="LRR 6">
    <location>
        <begin position="211"/>
        <end position="233"/>
    </location>
</feature>
<feature type="repeat" description="LRR 7">
    <location>
        <begin position="234"/>
        <end position="258"/>
    </location>
</feature>
<feature type="repeat" description="LRR 8">
    <location>
        <begin position="259"/>
        <end position="282"/>
    </location>
</feature>
<feature type="repeat" description="LRR 9">
    <location>
        <begin position="283"/>
        <end position="307"/>
    </location>
</feature>
<feature type="repeat" description="LRR 10">
    <location>
        <begin position="310"/>
        <end position="333"/>
    </location>
</feature>
<feature type="repeat" description="LRR 11">
    <location>
        <begin position="335"/>
        <end position="359"/>
    </location>
</feature>
<feature type="repeat" description="LRR 12">
    <location>
        <begin position="361"/>
        <end position="384"/>
    </location>
</feature>
<feature type="repeat" description="LRR 13">
    <location>
        <begin position="385"/>
        <end position="408"/>
    </location>
</feature>
<feature type="repeat" description="LRR 14">
    <location>
        <begin position="410"/>
        <end position="432"/>
    </location>
</feature>
<feature type="repeat" description="LRR 15">
    <location>
        <begin position="433"/>
        <end position="455"/>
    </location>
</feature>
<feature type="repeat" description="LRR 16">
    <location>
        <begin position="457"/>
        <end position="480"/>
    </location>
</feature>
<feature type="repeat" description="LRR 17">
    <location>
        <begin position="481"/>
        <end position="504"/>
    </location>
</feature>
<feature type="repeat" description="LRR 18">
    <location>
        <begin position="505"/>
        <end position="528"/>
    </location>
</feature>
<feature type="repeat" description="LRR 19">
    <location>
        <begin position="530"/>
        <end position="551"/>
    </location>
</feature>
<feature type="repeat" description="LRR 20">
    <location>
        <begin position="552"/>
        <end position="574"/>
    </location>
</feature>
<feature type="repeat" description="LRR 21">
    <location>
        <begin position="575"/>
        <end position="600"/>
    </location>
</feature>
<feature type="domain" description="Protein kinase" evidence="5">
    <location>
        <begin position="702"/>
        <end position="1002"/>
    </location>
</feature>
<feature type="active site" description="Proton acceptor" evidence="5 6">
    <location>
        <position position="839"/>
    </location>
</feature>
<feature type="binding site" evidence="5">
    <location>
        <begin position="708"/>
        <end position="716"/>
    </location>
    <ligand>
        <name>ATP</name>
        <dbReference type="ChEBI" id="CHEBI:30616"/>
    </ligand>
</feature>
<feature type="binding site" evidence="5">
    <location>
        <position position="731"/>
    </location>
    <ligand>
        <name>ATP</name>
        <dbReference type="ChEBI" id="CHEBI:30616"/>
    </ligand>
</feature>
<feature type="modified residue" description="Phosphothreonine" evidence="3">
    <location>
        <position position="699"/>
    </location>
</feature>
<feature type="modified residue" description="Phosphotyrosine" evidence="3">
    <location>
        <position position="781"/>
    </location>
</feature>
<feature type="modified residue" description="Phosphotyrosine" evidence="2">
    <location>
        <position position="826"/>
    </location>
</feature>
<feature type="modified residue" description="Phosphotyrosine" evidence="2">
    <location>
        <position position="887"/>
    </location>
</feature>
<feature type="glycosylation site" description="N-linked (GlcNAc...) asparagine" evidence="4">
    <location>
        <position position="48"/>
    </location>
</feature>
<feature type="glycosylation site" description="N-linked (GlcNAc...) asparagine" evidence="4">
    <location>
        <position position="88"/>
    </location>
</feature>
<feature type="glycosylation site" description="N-linked (GlcNAc...) asparagine" evidence="4">
    <location>
        <position position="136"/>
    </location>
</feature>
<feature type="glycosylation site" description="N-linked (GlcNAc...) asparagine" evidence="4">
    <location>
        <position position="184"/>
    </location>
</feature>
<feature type="glycosylation site" description="N-linked (GlcNAc...) asparagine" evidence="4">
    <location>
        <position position="221"/>
    </location>
</feature>
<feature type="glycosylation site" description="N-linked (GlcNAc...) asparagine" evidence="4">
    <location>
        <position position="232"/>
    </location>
</feature>
<feature type="glycosylation site" description="N-linked (GlcNAc...) asparagine" evidence="4">
    <location>
        <position position="281"/>
    </location>
</feature>
<feature type="glycosylation site" description="N-linked (GlcNAc...) asparagine" evidence="4">
    <location>
        <position position="294"/>
    </location>
</feature>
<feature type="glycosylation site" description="N-linked (GlcNAc...) asparagine" evidence="4">
    <location>
        <position position="334"/>
    </location>
</feature>
<feature type="glycosylation site" description="N-linked (GlcNAc...) asparagine" evidence="4">
    <location>
        <position position="358"/>
    </location>
</feature>
<feature type="glycosylation site" description="N-linked (GlcNAc...) asparagine" evidence="4">
    <location>
        <position position="431"/>
    </location>
</feature>
<feature type="glycosylation site" description="N-linked (GlcNAc...) asparagine" evidence="4">
    <location>
        <position position="455"/>
    </location>
</feature>
<feature type="glycosylation site" description="N-linked (GlcNAc...) asparagine" evidence="4">
    <location>
        <position position="470"/>
    </location>
</feature>
<feature type="glycosylation site" description="N-linked (GlcNAc...) asparagine" evidence="4">
    <location>
        <position position="582"/>
    </location>
</feature>
<feature type="glycosylation site" description="N-linked (GlcNAc...) asparagine" evidence="4">
    <location>
        <position position="600"/>
    </location>
</feature>
<feature type="sequence conflict" description="In Ref. 3; AAL36369." evidence="7" ref="3">
    <original>I</original>
    <variation>V</variation>
    <location>
        <position position="995"/>
    </location>
</feature>
<dbReference type="EC" id="2.7.11.1"/>
<dbReference type="EMBL" id="AL132955">
    <property type="protein sequence ID" value="CAB61983.1"/>
    <property type="status" value="ALT_SEQ"/>
    <property type="molecule type" value="Genomic_DNA"/>
</dbReference>
<dbReference type="EMBL" id="CP002686">
    <property type="protein sequence ID" value="AEE78303.1"/>
    <property type="molecule type" value="Genomic_DNA"/>
</dbReference>
<dbReference type="EMBL" id="AY064013">
    <property type="protein sequence ID" value="AAL36369.1"/>
    <property type="molecule type" value="mRNA"/>
</dbReference>
<dbReference type="EMBL" id="FJ708735">
    <property type="protein sequence ID" value="ACN59329.1"/>
    <property type="molecule type" value="mRNA"/>
</dbReference>
<dbReference type="PIR" id="T45717">
    <property type="entry name" value="T45717"/>
</dbReference>
<dbReference type="RefSeq" id="NP_566892.1">
    <property type="nucleotide sequence ID" value="NM_114625.3"/>
</dbReference>
<dbReference type="SMR" id="C0LGP4"/>
<dbReference type="BioGRID" id="9231">
    <property type="interactions" value="5"/>
</dbReference>
<dbReference type="FunCoup" id="C0LGP4">
    <property type="interactions" value="735"/>
</dbReference>
<dbReference type="IntAct" id="C0LGP4">
    <property type="interactions" value="5"/>
</dbReference>
<dbReference type="STRING" id="3702.C0LGP4"/>
<dbReference type="GlyGen" id="C0LGP4">
    <property type="glycosylation" value="16 sites"/>
</dbReference>
<dbReference type="iPTMnet" id="C0LGP4"/>
<dbReference type="PaxDb" id="3702-AT3G47570.1"/>
<dbReference type="ProteomicsDB" id="234609"/>
<dbReference type="EnsemblPlants" id="AT3G47570.1">
    <property type="protein sequence ID" value="AT3G47570.1"/>
    <property type="gene ID" value="AT3G47570"/>
</dbReference>
<dbReference type="GeneID" id="823911"/>
<dbReference type="Gramene" id="AT3G47570.1">
    <property type="protein sequence ID" value="AT3G47570.1"/>
    <property type="gene ID" value="AT3G47570"/>
</dbReference>
<dbReference type="KEGG" id="ath:AT3G47570"/>
<dbReference type="Araport" id="AT3G47570"/>
<dbReference type="TAIR" id="AT3G47570"/>
<dbReference type="eggNOG" id="ENOG502QPYS">
    <property type="taxonomic scope" value="Eukaryota"/>
</dbReference>
<dbReference type="HOGENOM" id="CLU_000288_22_0_1"/>
<dbReference type="InParanoid" id="C0LGP4"/>
<dbReference type="OMA" id="DVFHENI"/>
<dbReference type="PhylomeDB" id="C0LGP4"/>
<dbReference type="PRO" id="PR:C0LGP4"/>
<dbReference type="Proteomes" id="UP000006548">
    <property type="component" value="Chromosome 3"/>
</dbReference>
<dbReference type="ExpressionAtlas" id="C0LGP4">
    <property type="expression patterns" value="baseline and differential"/>
</dbReference>
<dbReference type="GO" id="GO:0005886">
    <property type="term" value="C:plasma membrane"/>
    <property type="evidence" value="ECO:0007669"/>
    <property type="project" value="UniProtKB-SubCell"/>
</dbReference>
<dbReference type="GO" id="GO:0005524">
    <property type="term" value="F:ATP binding"/>
    <property type="evidence" value="ECO:0007669"/>
    <property type="project" value="UniProtKB-KW"/>
</dbReference>
<dbReference type="GO" id="GO:0106310">
    <property type="term" value="F:protein serine kinase activity"/>
    <property type="evidence" value="ECO:0007669"/>
    <property type="project" value="RHEA"/>
</dbReference>
<dbReference type="GO" id="GO:0004674">
    <property type="term" value="F:protein serine/threonine kinase activity"/>
    <property type="evidence" value="ECO:0007669"/>
    <property type="project" value="UniProtKB-KW"/>
</dbReference>
<dbReference type="FunFam" id="3.80.10.10:FF:000383">
    <property type="entry name" value="Leucine-rich repeat receptor protein kinase EMS1"/>
    <property type="match status" value="1"/>
</dbReference>
<dbReference type="FunFam" id="3.30.200.20:FF:000432">
    <property type="entry name" value="LRR receptor-like serine/threonine-protein kinase EFR"/>
    <property type="match status" value="1"/>
</dbReference>
<dbReference type="FunFam" id="3.80.10.10:FF:000288">
    <property type="entry name" value="LRR receptor-like serine/threonine-protein kinase EFR"/>
    <property type="match status" value="1"/>
</dbReference>
<dbReference type="FunFam" id="3.80.10.10:FF:001346">
    <property type="entry name" value="LRR receptor-like serine/threonine-protein kinase EFR"/>
    <property type="match status" value="1"/>
</dbReference>
<dbReference type="FunFam" id="3.80.10.10:FF:002659">
    <property type="entry name" value="Probable LRR receptor-like serine/threonine-protein kinase At3g47570"/>
    <property type="match status" value="1"/>
</dbReference>
<dbReference type="FunFam" id="1.10.510.10:FF:000358">
    <property type="entry name" value="Putative leucine-rich repeat receptor-like serine/threonine-protein kinase"/>
    <property type="match status" value="1"/>
</dbReference>
<dbReference type="Gene3D" id="3.30.200.20">
    <property type="entry name" value="Phosphorylase Kinase, domain 1"/>
    <property type="match status" value="1"/>
</dbReference>
<dbReference type="Gene3D" id="3.80.10.10">
    <property type="entry name" value="Ribonuclease Inhibitor"/>
    <property type="match status" value="4"/>
</dbReference>
<dbReference type="Gene3D" id="1.10.510.10">
    <property type="entry name" value="Transferase(Phosphotransferase) domain 1"/>
    <property type="match status" value="1"/>
</dbReference>
<dbReference type="InterPro" id="IPR011009">
    <property type="entry name" value="Kinase-like_dom_sf"/>
</dbReference>
<dbReference type="InterPro" id="IPR001611">
    <property type="entry name" value="Leu-rich_rpt"/>
</dbReference>
<dbReference type="InterPro" id="IPR003591">
    <property type="entry name" value="Leu-rich_rpt_typical-subtyp"/>
</dbReference>
<dbReference type="InterPro" id="IPR032675">
    <property type="entry name" value="LRR_dom_sf"/>
</dbReference>
<dbReference type="InterPro" id="IPR013210">
    <property type="entry name" value="LRR_N_plant-typ"/>
</dbReference>
<dbReference type="InterPro" id="IPR055414">
    <property type="entry name" value="LRR_R13L4/SHOC2-like"/>
</dbReference>
<dbReference type="InterPro" id="IPR051809">
    <property type="entry name" value="Plant_receptor-like_S/T_kinase"/>
</dbReference>
<dbReference type="InterPro" id="IPR000719">
    <property type="entry name" value="Prot_kinase_dom"/>
</dbReference>
<dbReference type="InterPro" id="IPR017441">
    <property type="entry name" value="Protein_kinase_ATP_BS"/>
</dbReference>
<dbReference type="InterPro" id="IPR001245">
    <property type="entry name" value="Ser-Thr/Tyr_kinase_cat_dom"/>
</dbReference>
<dbReference type="InterPro" id="IPR008271">
    <property type="entry name" value="Ser/Thr_kinase_AS"/>
</dbReference>
<dbReference type="PANTHER" id="PTHR27008:SF526">
    <property type="entry name" value="GENOME ASSEMBLY, CHROMOSOME: A10"/>
    <property type="match status" value="1"/>
</dbReference>
<dbReference type="PANTHER" id="PTHR27008">
    <property type="entry name" value="OS04G0122200 PROTEIN"/>
    <property type="match status" value="1"/>
</dbReference>
<dbReference type="Pfam" id="PF00560">
    <property type="entry name" value="LRR_1"/>
    <property type="match status" value="2"/>
</dbReference>
<dbReference type="Pfam" id="PF23598">
    <property type="entry name" value="LRR_14"/>
    <property type="match status" value="1"/>
</dbReference>
<dbReference type="Pfam" id="PF08263">
    <property type="entry name" value="LRRNT_2"/>
    <property type="match status" value="1"/>
</dbReference>
<dbReference type="Pfam" id="PF07714">
    <property type="entry name" value="PK_Tyr_Ser-Thr"/>
    <property type="match status" value="1"/>
</dbReference>
<dbReference type="SMART" id="SM00369">
    <property type="entry name" value="LRR_TYP"/>
    <property type="match status" value="8"/>
</dbReference>
<dbReference type="SMART" id="SM00220">
    <property type="entry name" value="S_TKc"/>
    <property type="match status" value="1"/>
</dbReference>
<dbReference type="SUPFAM" id="SSF52058">
    <property type="entry name" value="L domain-like"/>
    <property type="match status" value="2"/>
</dbReference>
<dbReference type="SUPFAM" id="SSF56112">
    <property type="entry name" value="Protein kinase-like (PK-like)"/>
    <property type="match status" value="1"/>
</dbReference>
<dbReference type="PROSITE" id="PS00107">
    <property type="entry name" value="PROTEIN_KINASE_ATP"/>
    <property type="match status" value="1"/>
</dbReference>
<dbReference type="PROSITE" id="PS50011">
    <property type="entry name" value="PROTEIN_KINASE_DOM"/>
    <property type="match status" value="1"/>
</dbReference>
<dbReference type="PROSITE" id="PS00108">
    <property type="entry name" value="PROTEIN_KINASE_ST"/>
    <property type="match status" value="1"/>
</dbReference>
<sequence length="1010" mass="110901">MRLFLLLAFNALMLLETHGFTDETDRQALLQFKSQVSEDKRVVLSSWNHSFPLCNWKGVTCGRKNKRVTHLELGRLQLGGVISPSIGNLSFLVSLDLYENFFGGTIPQEVGQLSRLEYLDMGINYLRGPIPLGLYNCSRLLNLRLDSNRLGGSVPSELGSLTNLVQLNLYGNNMRGKLPTSLGNLTLLEQLALSHNNLEGEIPSDVAQLTQIWSLQLVANNFSGVFPPALYNLSSLKLLGIGYNHFSGRLRPDLGILLPNLLSFNMGGNYFTGSIPTTLSNISTLERLGMNENNLTGSIPTFGNVPNLKLLFLHTNSLGSDSSRDLEFLTSLTNCTQLETLGIGRNRLGGDLPISIANLSAKLVTLDLGGTLISGSIPYDIGNLINLQKLILDQNMLSGPLPTSLGKLLNLRYLSLFSNRLSGGIPAFIGNMTMLETLDLSNNGFEGIVPTSLGNCSHLLELWIGDNKLNGTIPLEIMKIQQLLRLDMSGNSLIGSLPQDIGALQNLGTLSLGDNKLSGKLPQTLGNCLTMESLFLEGNLFYGDIPDLKGLVGVKEVDLSNNDLSGSIPEYFASFSKLEYLNLSFNNLEGKVPVKGIFENATTVSIVGNNDLCGGIMGFQLKPCLSQAPSVVKKHSSRLKKVVIGVSVGITLLLLLFMASVTLIWLRKRKKNKETNNPTPSTLEVLHEKISYGDLRNATNGFSSSNMVGSGSFGTVYKALLLTEKKVVAVKVLNMQRRGAMKSFMAECESLKDIRHRNLVKLLTACSSIDFQGNEFRALIYEFMPNGSLDMWLHPEEVEEIHRPSRTLTLLERLNIAIDVASVLDYLHVHCHEPIAHCDLKPSNVLLDDDLTAHVSDFGLARLLLKFDEESFFNQLSSAGVRGTIGYAAPEYGVGGQPSINGDVYSFGILLLEMFTGKRPTNELFGGNFTLNSYTKSALPERILDIVDESILHIGLRVGFPVVECLTMVFEVGLRCCEESPMNRLATSIVVKELISIRERFFKASRTTWR</sequence>
<evidence type="ECO:0000250" key="1"/>
<evidence type="ECO:0000250" key="2">
    <source>
        <dbReference type="UniProtKB" id="C0LGT6"/>
    </source>
</evidence>
<evidence type="ECO:0000250" key="3">
    <source>
        <dbReference type="UniProtKB" id="O22476"/>
    </source>
</evidence>
<evidence type="ECO:0000255" key="4"/>
<evidence type="ECO:0000255" key="5">
    <source>
        <dbReference type="PROSITE-ProRule" id="PRU00159"/>
    </source>
</evidence>
<evidence type="ECO:0000255" key="6">
    <source>
        <dbReference type="PROSITE-ProRule" id="PRU10027"/>
    </source>
</evidence>
<evidence type="ECO:0000305" key="7"/>
<accession>C0LGP4</accession>
<accession>Q8VZM3</accession>
<accession>Q9SN81</accession>
<proteinExistence type="evidence at transcript level"/>
<reference key="1">
    <citation type="journal article" date="2000" name="Nature">
        <title>Sequence and analysis of chromosome 3 of the plant Arabidopsis thaliana.</title>
        <authorList>
            <person name="Salanoubat M."/>
            <person name="Lemcke K."/>
            <person name="Rieger M."/>
            <person name="Ansorge W."/>
            <person name="Unseld M."/>
            <person name="Fartmann B."/>
            <person name="Valle G."/>
            <person name="Bloecker H."/>
            <person name="Perez-Alonso M."/>
            <person name="Obermaier B."/>
            <person name="Delseny M."/>
            <person name="Boutry M."/>
            <person name="Grivell L.A."/>
            <person name="Mache R."/>
            <person name="Puigdomenech P."/>
            <person name="De Simone V."/>
            <person name="Choisne N."/>
            <person name="Artiguenave F."/>
            <person name="Robert C."/>
            <person name="Brottier P."/>
            <person name="Wincker P."/>
            <person name="Cattolico L."/>
            <person name="Weissenbach J."/>
            <person name="Saurin W."/>
            <person name="Quetier F."/>
            <person name="Schaefer M."/>
            <person name="Mueller-Auer S."/>
            <person name="Gabel C."/>
            <person name="Fuchs M."/>
            <person name="Benes V."/>
            <person name="Wurmbach E."/>
            <person name="Drzonek H."/>
            <person name="Erfle H."/>
            <person name="Jordan N."/>
            <person name="Bangert S."/>
            <person name="Wiedelmann R."/>
            <person name="Kranz H."/>
            <person name="Voss H."/>
            <person name="Holland R."/>
            <person name="Brandt P."/>
            <person name="Nyakatura G."/>
            <person name="Vezzi A."/>
            <person name="D'Angelo M."/>
            <person name="Pallavicini A."/>
            <person name="Toppo S."/>
            <person name="Simionati B."/>
            <person name="Conrad A."/>
            <person name="Hornischer K."/>
            <person name="Kauer G."/>
            <person name="Loehnert T.-H."/>
            <person name="Nordsiek G."/>
            <person name="Reichelt J."/>
            <person name="Scharfe M."/>
            <person name="Schoen O."/>
            <person name="Bargues M."/>
            <person name="Terol J."/>
            <person name="Climent J."/>
            <person name="Navarro P."/>
            <person name="Collado C."/>
            <person name="Perez-Perez A."/>
            <person name="Ottenwaelder B."/>
            <person name="Duchemin D."/>
            <person name="Cooke R."/>
            <person name="Laudie M."/>
            <person name="Berger-Llauro C."/>
            <person name="Purnelle B."/>
            <person name="Masuy D."/>
            <person name="de Haan M."/>
            <person name="Maarse A.C."/>
            <person name="Alcaraz J.-P."/>
            <person name="Cottet A."/>
            <person name="Casacuberta E."/>
            <person name="Monfort A."/>
            <person name="Argiriou A."/>
            <person name="Flores M."/>
            <person name="Liguori R."/>
            <person name="Vitale D."/>
            <person name="Mannhaupt G."/>
            <person name="Haase D."/>
            <person name="Schoof H."/>
            <person name="Rudd S."/>
            <person name="Zaccaria P."/>
            <person name="Mewes H.-W."/>
            <person name="Mayer K.F.X."/>
            <person name="Kaul S."/>
            <person name="Town C.D."/>
            <person name="Koo H.L."/>
            <person name="Tallon L.J."/>
            <person name="Jenkins J."/>
            <person name="Rooney T."/>
            <person name="Rizzo M."/>
            <person name="Walts A."/>
            <person name="Utterback T."/>
            <person name="Fujii C.Y."/>
            <person name="Shea T.P."/>
            <person name="Creasy T.H."/>
            <person name="Haas B."/>
            <person name="Maiti R."/>
            <person name="Wu D."/>
            <person name="Peterson J."/>
            <person name="Van Aken S."/>
            <person name="Pai G."/>
            <person name="Militscher J."/>
            <person name="Sellers P."/>
            <person name="Gill J.E."/>
            <person name="Feldblyum T.V."/>
            <person name="Preuss D."/>
            <person name="Lin X."/>
            <person name="Nierman W.C."/>
            <person name="Salzberg S.L."/>
            <person name="White O."/>
            <person name="Venter J.C."/>
            <person name="Fraser C.M."/>
            <person name="Kaneko T."/>
            <person name="Nakamura Y."/>
            <person name="Sato S."/>
            <person name="Kato T."/>
            <person name="Asamizu E."/>
            <person name="Sasamoto S."/>
            <person name="Kimura T."/>
            <person name="Idesawa K."/>
            <person name="Kawashima K."/>
            <person name="Kishida Y."/>
            <person name="Kiyokawa C."/>
            <person name="Kohara M."/>
            <person name="Matsumoto M."/>
            <person name="Matsuno A."/>
            <person name="Muraki A."/>
            <person name="Nakayama S."/>
            <person name="Nakazaki N."/>
            <person name="Shinpo S."/>
            <person name="Takeuchi C."/>
            <person name="Wada T."/>
            <person name="Watanabe A."/>
            <person name="Yamada M."/>
            <person name="Yasuda M."/>
            <person name="Tabata S."/>
        </authorList>
    </citation>
    <scope>NUCLEOTIDE SEQUENCE [LARGE SCALE GENOMIC DNA]</scope>
    <source>
        <strain>cv. Columbia</strain>
    </source>
</reference>
<reference key="2">
    <citation type="journal article" date="2017" name="Plant J.">
        <title>Araport11: a complete reannotation of the Arabidopsis thaliana reference genome.</title>
        <authorList>
            <person name="Cheng C.Y."/>
            <person name="Krishnakumar V."/>
            <person name="Chan A.P."/>
            <person name="Thibaud-Nissen F."/>
            <person name="Schobel S."/>
            <person name="Town C.D."/>
        </authorList>
    </citation>
    <scope>GENOME REANNOTATION</scope>
    <source>
        <strain>cv. Columbia</strain>
    </source>
</reference>
<reference key="3">
    <citation type="journal article" date="2003" name="Science">
        <title>Empirical analysis of transcriptional activity in the Arabidopsis genome.</title>
        <authorList>
            <person name="Yamada K."/>
            <person name="Lim J."/>
            <person name="Dale J.M."/>
            <person name="Chen H."/>
            <person name="Shinn P."/>
            <person name="Palm C.J."/>
            <person name="Southwick A.M."/>
            <person name="Wu H.C."/>
            <person name="Kim C.J."/>
            <person name="Nguyen M."/>
            <person name="Pham P.K."/>
            <person name="Cheuk R.F."/>
            <person name="Karlin-Newmann G."/>
            <person name="Liu S.X."/>
            <person name="Lam B."/>
            <person name="Sakano H."/>
            <person name="Wu T."/>
            <person name="Yu G."/>
            <person name="Miranda M."/>
            <person name="Quach H.L."/>
            <person name="Tripp M."/>
            <person name="Chang C.H."/>
            <person name="Lee J.M."/>
            <person name="Toriumi M.J."/>
            <person name="Chan M.M."/>
            <person name="Tang C.C."/>
            <person name="Onodera C.S."/>
            <person name="Deng J.M."/>
            <person name="Akiyama K."/>
            <person name="Ansari Y."/>
            <person name="Arakawa T."/>
            <person name="Banh J."/>
            <person name="Banno F."/>
            <person name="Bowser L."/>
            <person name="Brooks S.Y."/>
            <person name="Carninci P."/>
            <person name="Chao Q."/>
            <person name="Choy N."/>
            <person name="Enju A."/>
            <person name="Goldsmith A.D."/>
            <person name="Gurjal M."/>
            <person name="Hansen N.F."/>
            <person name="Hayashizaki Y."/>
            <person name="Johnson-Hopson C."/>
            <person name="Hsuan V.W."/>
            <person name="Iida K."/>
            <person name="Karnes M."/>
            <person name="Khan S."/>
            <person name="Koesema E."/>
            <person name="Ishida J."/>
            <person name="Jiang P.X."/>
            <person name="Jones T."/>
            <person name="Kawai J."/>
            <person name="Kamiya A."/>
            <person name="Meyers C."/>
            <person name="Nakajima M."/>
            <person name="Narusaka M."/>
            <person name="Seki M."/>
            <person name="Sakurai T."/>
            <person name="Satou M."/>
            <person name="Tamse R."/>
            <person name="Vaysberg M."/>
            <person name="Wallender E.K."/>
            <person name="Wong C."/>
            <person name="Yamamura Y."/>
            <person name="Yuan S."/>
            <person name="Shinozaki K."/>
            <person name="Davis R.W."/>
            <person name="Theologis A."/>
            <person name="Ecker J.R."/>
        </authorList>
    </citation>
    <scope>NUCLEOTIDE SEQUENCE [LARGE SCALE MRNA]</scope>
    <source>
        <strain>cv. Columbia</strain>
    </source>
</reference>
<reference key="4">
    <citation type="journal article" date="2010" name="BMC Genomics">
        <title>Genome-wide cloning and sequence analysis of leucine-rich repeat receptor-like protein kinase genes in Arabidopsis thaliana.</title>
        <authorList>
            <person name="Gou X."/>
            <person name="He K."/>
            <person name="Yang H."/>
            <person name="Yuan T."/>
            <person name="Lin H."/>
            <person name="Clouse S.D."/>
            <person name="Li J."/>
        </authorList>
    </citation>
    <scope>NUCLEOTIDE SEQUENCE [LARGE SCALE MRNA]</scope>
    <source>
        <strain>cv. Columbia</strain>
    </source>
</reference>
<gene>
    <name type="ordered locus">At3g47570</name>
    <name type="ORF">F1P2.120</name>
</gene>